<evidence type="ECO:0000255" key="1">
    <source>
        <dbReference type="HAMAP-Rule" id="MF_00197"/>
    </source>
</evidence>
<gene>
    <name evidence="1" type="primary">dapF</name>
    <name type="ordered locus">ASA_3680</name>
</gene>
<keyword id="KW-0028">Amino-acid biosynthesis</keyword>
<keyword id="KW-0963">Cytoplasm</keyword>
<keyword id="KW-0413">Isomerase</keyword>
<keyword id="KW-0457">Lysine biosynthesis</keyword>
<organism>
    <name type="scientific">Aeromonas salmonicida (strain A449)</name>
    <dbReference type="NCBI Taxonomy" id="382245"/>
    <lineage>
        <taxon>Bacteria</taxon>
        <taxon>Pseudomonadati</taxon>
        <taxon>Pseudomonadota</taxon>
        <taxon>Gammaproteobacteria</taxon>
        <taxon>Aeromonadales</taxon>
        <taxon>Aeromonadaceae</taxon>
        <taxon>Aeromonas</taxon>
    </lineage>
</organism>
<name>DAPF_AERS4</name>
<dbReference type="EC" id="5.1.1.7" evidence="1"/>
<dbReference type="EMBL" id="CP000644">
    <property type="protein sequence ID" value="ABO91641.1"/>
    <property type="molecule type" value="Genomic_DNA"/>
</dbReference>
<dbReference type="RefSeq" id="WP_011899114.1">
    <property type="nucleotide sequence ID" value="NC_009348.1"/>
</dbReference>
<dbReference type="SMR" id="A4SRW9"/>
<dbReference type="STRING" id="29491.GCA_000820065_04327"/>
<dbReference type="KEGG" id="asa:ASA_3680"/>
<dbReference type="eggNOG" id="COG0253">
    <property type="taxonomic scope" value="Bacteria"/>
</dbReference>
<dbReference type="HOGENOM" id="CLU_053306_1_1_6"/>
<dbReference type="UniPathway" id="UPA00034">
    <property type="reaction ID" value="UER00025"/>
</dbReference>
<dbReference type="Proteomes" id="UP000000225">
    <property type="component" value="Chromosome"/>
</dbReference>
<dbReference type="GO" id="GO:0005829">
    <property type="term" value="C:cytosol"/>
    <property type="evidence" value="ECO:0007669"/>
    <property type="project" value="TreeGrafter"/>
</dbReference>
<dbReference type="GO" id="GO:0008837">
    <property type="term" value="F:diaminopimelate epimerase activity"/>
    <property type="evidence" value="ECO:0007669"/>
    <property type="project" value="UniProtKB-UniRule"/>
</dbReference>
<dbReference type="GO" id="GO:0009089">
    <property type="term" value="P:lysine biosynthetic process via diaminopimelate"/>
    <property type="evidence" value="ECO:0007669"/>
    <property type="project" value="UniProtKB-UniRule"/>
</dbReference>
<dbReference type="FunFam" id="3.10.310.10:FF:000001">
    <property type="entry name" value="Diaminopimelate epimerase"/>
    <property type="match status" value="1"/>
</dbReference>
<dbReference type="FunFam" id="3.10.310.10:FF:000002">
    <property type="entry name" value="Diaminopimelate epimerase"/>
    <property type="match status" value="1"/>
</dbReference>
<dbReference type="Gene3D" id="3.10.310.10">
    <property type="entry name" value="Diaminopimelate Epimerase, Chain A, domain 1"/>
    <property type="match status" value="2"/>
</dbReference>
<dbReference type="HAMAP" id="MF_00197">
    <property type="entry name" value="DAP_epimerase"/>
    <property type="match status" value="1"/>
</dbReference>
<dbReference type="InterPro" id="IPR018510">
    <property type="entry name" value="DAP_epimerase_AS"/>
</dbReference>
<dbReference type="InterPro" id="IPR001653">
    <property type="entry name" value="DAP_epimerase_DapF"/>
</dbReference>
<dbReference type="NCBIfam" id="TIGR00652">
    <property type="entry name" value="DapF"/>
    <property type="match status" value="1"/>
</dbReference>
<dbReference type="PANTHER" id="PTHR31689:SF0">
    <property type="entry name" value="DIAMINOPIMELATE EPIMERASE"/>
    <property type="match status" value="1"/>
</dbReference>
<dbReference type="PANTHER" id="PTHR31689">
    <property type="entry name" value="DIAMINOPIMELATE EPIMERASE, CHLOROPLASTIC"/>
    <property type="match status" value="1"/>
</dbReference>
<dbReference type="Pfam" id="PF01678">
    <property type="entry name" value="DAP_epimerase"/>
    <property type="match status" value="2"/>
</dbReference>
<dbReference type="SUPFAM" id="SSF54506">
    <property type="entry name" value="Diaminopimelate epimerase-like"/>
    <property type="match status" value="1"/>
</dbReference>
<dbReference type="PROSITE" id="PS01326">
    <property type="entry name" value="DAP_EPIMERASE"/>
    <property type="match status" value="1"/>
</dbReference>
<comment type="function">
    <text evidence="1">Catalyzes the stereoinversion of LL-2,6-diaminopimelate (L,L-DAP) to meso-diaminopimelate (meso-DAP), a precursor of L-lysine and an essential component of the bacterial peptidoglycan.</text>
</comment>
<comment type="catalytic activity">
    <reaction evidence="1">
        <text>(2S,6S)-2,6-diaminopimelate = meso-2,6-diaminopimelate</text>
        <dbReference type="Rhea" id="RHEA:15393"/>
        <dbReference type="ChEBI" id="CHEBI:57609"/>
        <dbReference type="ChEBI" id="CHEBI:57791"/>
        <dbReference type="EC" id="5.1.1.7"/>
    </reaction>
</comment>
<comment type="pathway">
    <text evidence="1">Amino-acid biosynthesis; L-lysine biosynthesis via DAP pathway; DL-2,6-diaminopimelate from LL-2,6-diaminopimelate: step 1/1.</text>
</comment>
<comment type="subunit">
    <text evidence="1">Homodimer.</text>
</comment>
<comment type="subcellular location">
    <subcellularLocation>
        <location evidence="1">Cytoplasm</location>
    </subcellularLocation>
</comment>
<comment type="similarity">
    <text evidence="1">Belongs to the diaminopimelate epimerase family.</text>
</comment>
<accession>A4SRW9</accession>
<protein>
    <recommendedName>
        <fullName evidence="1">Diaminopimelate epimerase</fullName>
        <shortName evidence="1">DAP epimerase</shortName>
        <ecNumber evidence="1">5.1.1.7</ecNumber>
    </recommendedName>
    <alternativeName>
        <fullName evidence="1">PLP-independent amino acid racemase</fullName>
    </alternativeName>
</protein>
<feature type="chain" id="PRO_1000011830" description="Diaminopimelate epimerase">
    <location>
        <begin position="1"/>
        <end position="276"/>
    </location>
</feature>
<feature type="active site" description="Proton donor" evidence="1">
    <location>
        <position position="75"/>
    </location>
</feature>
<feature type="active site" description="Proton acceptor" evidence="1">
    <location>
        <position position="219"/>
    </location>
</feature>
<feature type="binding site" evidence="1">
    <location>
        <position position="13"/>
    </location>
    <ligand>
        <name>substrate</name>
    </ligand>
</feature>
<feature type="binding site" evidence="1">
    <location>
        <position position="46"/>
    </location>
    <ligand>
        <name>substrate</name>
    </ligand>
</feature>
<feature type="binding site" evidence="1">
    <location>
        <position position="66"/>
    </location>
    <ligand>
        <name>substrate</name>
    </ligand>
</feature>
<feature type="binding site" evidence="1">
    <location>
        <begin position="76"/>
        <end position="77"/>
    </location>
    <ligand>
        <name>substrate</name>
    </ligand>
</feature>
<feature type="binding site" evidence="1">
    <location>
        <position position="159"/>
    </location>
    <ligand>
        <name>substrate</name>
    </ligand>
</feature>
<feature type="binding site" evidence="1">
    <location>
        <position position="192"/>
    </location>
    <ligand>
        <name>substrate</name>
    </ligand>
</feature>
<feature type="binding site" evidence="1">
    <location>
        <begin position="210"/>
        <end position="211"/>
    </location>
    <ligand>
        <name>substrate</name>
    </ligand>
</feature>
<feature type="binding site" evidence="1">
    <location>
        <begin position="220"/>
        <end position="221"/>
    </location>
    <ligand>
        <name>substrate</name>
    </ligand>
</feature>
<feature type="site" description="Could be important to modulate the pK values of the two catalytic cysteine residues" evidence="1">
    <location>
        <position position="161"/>
    </location>
</feature>
<feature type="site" description="Could be important to modulate the pK values of the two catalytic cysteine residues" evidence="1">
    <location>
        <position position="210"/>
    </location>
</feature>
<feature type="site" description="Important for dimerization" evidence="1">
    <location>
        <position position="270"/>
    </location>
</feature>
<proteinExistence type="inferred from homology"/>
<reference key="1">
    <citation type="journal article" date="2008" name="BMC Genomics">
        <title>The genome of Aeromonas salmonicida subsp. salmonicida A449: insights into the evolution of a fish pathogen.</title>
        <authorList>
            <person name="Reith M.E."/>
            <person name="Singh R.K."/>
            <person name="Curtis B."/>
            <person name="Boyd J.M."/>
            <person name="Bouevitch A."/>
            <person name="Kimball J."/>
            <person name="Munholland J."/>
            <person name="Murphy C."/>
            <person name="Sarty D."/>
            <person name="Williams J."/>
            <person name="Nash J.H."/>
            <person name="Johnson S.C."/>
            <person name="Brown L.L."/>
        </authorList>
    </citation>
    <scope>NUCLEOTIDE SEQUENCE [LARGE SCALE GENOMIC DNA]</scope>
    <source>
        <strain>A449</strain>
    </source>
</reference>
<sequence length="276" mass="30363">MLIDFSKMHGLGNDFMVVDGVTQKVFFSNDVIKKLADRHFGIGFDQLLLVEPPYDPELDFHYRIFNADGSEVEQCGNGARCFARFVRLKGLINRDRIAVSTARGRISLQLEGENQVTVNMGVPQFEPGKIPFRAQKAEKTYLLRAQEHTVMCGVVSMGNPHCVIEVPSVADAPVETLGAIMERHERFPERVNVGFMEMVNATEIRLRVFERGVGETLACGTGACAAAVIGISQGKLKERVTVSLPGGKLTIAWKGPGQPVYMTGPAEHVFDGQIEL</sequence>